<sequence length="66" mass="7748">MAKGKDVRIRVILECISCVRKGTNKESTGISRYSTQKNRHNTPGQLELRKFCRYCRKHTTHNEIKK</sequence>
<keyword id="KW-0150">Chloroplast</keyword>
<keyword id="KW-0934">Plastid</keyword>
<keyword id="KW-1185">Reference proteome</keyword>
<keyword id="KW-0687">Ribonucleoprotein</keyword>
<keyword id="KW-0689">Ribosomal protein</keyword>
<accession>A1E9U5</accession>
<feature type="chain" id="PRO_0000276519" description="Large ribosomal subunit protein bL33c">
    <location>
        <begin position="1"/>
        <end position="66"/>
    </location>
</feature>
<reference key="1">
    <citation type="journal article" date="2007" name="Theor. Appl. Genet.">
        <title>Complete chloroplast genome sequences of Hordeum vulgare, Sorghum bicolor and Agrostis stolonifera, and comparative analyses with other grass genomes.</title>
        <authorList>
            <person name="Saski C."/>
            <person name="Lee S.-B."/>
            <person name="Fjellheim S."/>
            <person name="Guda C."/>
            <person name="Jansen R.K."/>
            <person name="Luo H."/>
            <person name="Tomkins J."/>
            <person name="Rognli O.A."/>
            <person name="Daniell H."/>
            <person name="Clarke J.L."/>
        </authorList>
    </citation>
    <scope>NUCLEOTIDE SEQUENCE [LARGE SCALE GENOMIC DNA]</scope>
    <source>
        <strain>cv. BTx623</strain>
    </source>
</reference>
<proteinExistence type="inferred from homology"/>
<evidence type="ECO:0000255" key="1">
    <source>
        <dbReference type="HAMAP-Rule" id="MF_00294"/>
    </source>
</evidence>
<evidence type="ECO:0000305" key="2"/>
<name>RK33_SORBI</name>
<geneLocation type="chloroplast"/>
<gene>
    <name evidence="1" type="primary">rpl33</name>
</gene>
<organism>
    <name type="scientific">Sorghum bicolor</name>
    <name type="common">Sorghum</name>
    <name type="synonym">Sorghum vulgare</name>
    <dbReference type="NCBI Taxonomy" id="4558"/>
    <lineage>
        <taxon>Eukaryota</taxon>
        <taxon>Viridiplantae</taxon>
        <taxon>Streptophyta</taxon>
        <taxon>Embryophyta</taxon>
        <taxon>Tracheophyta</taxon>
        <taxon>Spermatophyta</taxon>
        <taxon>Magnoliopsida</taxon>
        <taxon>Liliopsida</taxon>
        <taxon>Poales</taxon>
        <taxon>Poaceae</taxon>
        <taxon>PACMAD clade</taxon>
        <taxon>Panicoideae</taxon>
        <taxon>Andropogonodae</taxon>
        <taxon>Andropogoneae</taxon>
        <taxon>Sorghinae</taxon>
        <taxon>Sorghum</taxon>
    </lineage>
</organism>
<comment type="subcellular location">
    <subcellularLocation>
        <location>Plastid</location>
        <location>Chloroplast</location>
    </subcellularLocation>
</comment>
<comment type="similarity">
    <text evidence="1">Belongs to the bacterial ribosomal protein bL33 family.</text>
</comment>
<protein>
    <recommendedName>
        <fullName evidence="1">Large ribosomal subunit protein bL33c</fullName>
    </recommendedName>
    <alternativeName>
        <fullName evidence="2">50S ribosomal protein L33, chloroplastic</fullName>
    </alternativeName>
</protein>
<dbReference type="EMBL" id="EF115542">
    <property type="protein sequence ID" value="ABK79517.1"/>
    <property type="molecule type" value="Genomic_DNA"/>
</dbReference>
<dbReference type="RefSeq" id="YP_899428.1">
    <property type="nucleotide sequence ID" value="NC_008602.1"/>
</dbReference>
<dbReference type="FunCoup" id="A1E9U5">
    <property type="interactions" value="39"/>
</dbReference>
<dbReference type="STRING" id="4558.A1E9U5"/>
<dbReference type="GeneID" id="4549212"/>
<dbReference type="KEGG" id="sbi:4549212"/>
<dbReference type="InParanoid" id="A1E9U5"/>
<dbReference type="OrthoDB" id="724366at2759"/>
<dbReference type="Proteomes" id="UP000000768">
    <property type="component" value="Chloroplast"/>
</dbReference>
<dbReference type="GO" id="GO:0009507">
    <property type="term" value="C:chloroplast"/>
    <property type="evidence" value="ECO:0007669"/>
    <property type="project" value="UniProtKB-SubCell"/>
</dbReference>
<dbReference type="GO" id="GO:1990904">
    <property type="term" value="C:ribonucleoprotein complex"/>
    <property type="evidence" value="ECO:0007669"/>
    <property type="project" value="UniProtKB-KW"/>
</dbReference>
<dbReference type="GO" id="GO:0005840">
    <property type="term" value="C:ribosome"/>
    <property type="evidence" value="ECO:0007669"/>
    <property type="project" value="UniProtKB-KW"/>
</dbReference>
<dbReference type="GO" id="GO:0003735">
    <property type="term" value="F:structural constituent of ribosome"/>
    <property type="evidence" value="ECO:0007669"/>
    <property type="project" value="InterPro"/>
</dbReference>
<dbReference type="GO" id="GO:0006412">
    <property type="term" value="P:translation"/>
    <property type="evidence" value="ECO:0007669"/>
    <property type="project" value="UniProtKB-UniRule"/>
</dbReference>
<dbReference type="Gene3D" id="2.20.28.120">
    <property type="entry name" value="Ribosomal protein L33"/>
    <property type="match status" value="1"/>
</dbReference>
<dbReference type="HAMAP" id="MF_00294">
    <property type="entry name" value="Ribosomal_bL33"/>
    <property type="match status" value="1"/>
</dbReference>
<dbReference type="InterPro" id="IPR001705">
    <property type="entry name" value="Ribosomal_bL33"/>
</dbReference>
<dbReference type="InterPro" id="IPR018264">
    <property type="entry name" value="Ribosomal_bL33_CS"/>
</dbReference>
<dbReference type="InterPro" id="IPR038584">
    <property type="entry name" value="Ribosomal_bL33_sf"/>
</dbReference>
<dbReference type="InterPro" id="IPR011332">
    <property type="entry name" value="Ribosomal_zn-bd"/>
</dbReference>
<dbReference type="NCBIfam" id="NF001764">
    <property type="entry name" value="PRK00504.1"/>
    <property type="match status" value="1"/>
</dbReference>
<dbReference type="NCBIfam" id="NF001860">
    <property type="entry name" value="PRK00595.1"/>
    <property type="match status" value="1"/>
</dbReference>
<dbReference type="NCBIfam" id="TIGR01023">
    <property type="entry name" value="rpmG_bact"/>
    <property type="match status" value="1"/>
</dbReference>
<dbReference type="PANTHER" id="PTHR43168">
    <property type="entry name" value="50S RIBOSOMAL PROTEIN L33, CHLOROPLASTIC"/>
    <property type="match status" value="1"/>
</dbReference>
<dbReference type="PANTHER" id="PTHR43168:SF2">
    <property type="entry name" value="LARGE RIBOSOMAL SUBUNIT PROTEIN BL33C"/>
    <property type="match status" value="1"/>
</dbReference>
<dbReference type="Pfam" id="PF00471">
    <property type="entry name" value="Ribosomal_L33"/>
    <property type="match status" value="1"/>
</dbReference>
<dbReference type="SUPFAM" id="SSF57829">
    <property type="entry name" value="Zn-binding ribosomal proteins"/>
    <property type="match status" value="1"/>
</dbReference>
<dbReference type="PROSITE" id="PS00582">
    <property type="entry name" value="RIBOSOMAL_L33"/>
    <property type="match status" value="1"/>
</dbReference>